<feature type="chain" id="PRO_0000335376" description="Ribosomal RNA small subunit methyltransferase G">
    <location>
        <begin position="1"/>
        <end position="235"/>
    </location>
</feature>
<feature type="region of interest" description="Disordered" evidence="2">
    <location>
        <begin position="211"/>
        <end position="235"/>
    </location>
</feature>
<feature type="compositionally biased region" description="Basic residues" evidence="2">
    <location>
        <begin position="213"/>
        <end position="235"/>
    </location>
</feature>
<feature type="binding site" evidence="1">
    <location>
        <position position="74"/>
    </location>
    <ligand>
        <name>S-adenosyl-L-methionine</name>
        <dbReference type="ChEBI" id="CHEBI:59789"/>
    </ligand>
</feature>
<feature type="binding site" evidence="1">
    <location>
        <position position="79"/>
    </location>
    <ligand>
        <name>S-adenosyl-L-methionine</name>
        <dbReference type="ChEBI" id="CHEBI:59789"/>
    </ligand>
</feature>
<feature type="binding site" evidence="1">
    <location>
        <begin position="124"/>
        <end position="125"/>
    </location>
    <ligand>
        <name>S-adenosyl-L-methionine</name>
        <dbReference type="ChEBI" id="CHEBI:59789"/>
    </ligand>
</feature>
<feature type="binding site" evidence="1">
    <location>
        <position position="142"/>
    </location>
    <ligand>
        <name>S-adenosyl-L-methionine</name>
        <dbReference type="ChEBI" id="CHEBI:59789"/>
    </ligand>
</feature>
<gene>
    <name evidence="1" type="primary">rsmG</name>
    <name type="synonym">gidB</name>
    <name type="ordered locus">MSMEG_6940</name>
    <name type="ordered locus">MSMEI_6748</name>
</gene>
<proteinExistence type="inferred from homology"/>
<keyword id="KW-0963">Cytoplasm</keyword>
<keyword id="KW-0489">Methyltransferase</keyword>
<keyword id="KW-1185">Reference proteome</keyword>
<keyword id="KW-0698">rRNA processing</keyword>
<keyword id="KW-0949">S-adenosyl-L-methionine</keyword>
<keyword id="KW-0808">Transferase</keyword>
<evidence type="ECO:0000255" key="1">
    <source>
        <dbReference type="HAMAP-Rule" id="MF_00074"/>
    </source>
</evidence>
<evidence type="ECO:0000256" key="2">
    <source>
        <dbReference type="SAM" id="MobiDB-lite"/>
    </source>
</evidence>
<evidence type="ECO:0000305" key="3"/>
<accession>A0R7J5</accession>
<accession>I7GGS6</accession>
<comment type="function">
    <text evidence="1">Specifically methylates the N7 position of guanine in position 518 of 16S rRNA.</text>
</comment>
<comment type="subcellular location">
    <subcellularLocation>
        <location evidence="1">Cytoplasm</location>
    </subcellularLocation>
</comment>
<comment type="similarity">
    <text evidence="1">Belongs to the methyltransferase superfamily. RNA methyltransferase RsmG family.</text>
</comment>
<comment type="sequence caution" evidence="3">
    <conflict type="erroneous initiation">
        <sequence resource="EMBL-CDS" id="AFP43174"/>
    </conflict>
    <text>Extended N-terminus.</text>
</comment>
<organism>
    <name type="scientific">Mycolicibacterium smegmatis (strain ATCC 700084 / mc(2)155)</name>
    <name type="common">Mycobacterium smegmatis</name>
    <dbReference type="NCBI Taxonomy" id="246196"/>
    <lineage>
        <taxon>Bacteria</taxon>
        <taxon>Bacillati</taxon>
        <taxon>Actinomycetota</taxon>
        <taxon>Actinomycetes</taxon>
        <taxon>Mycobacteriales</taxon>
        <taxon>Mycobacteriaceae</taxon>
        <taxon>Mycolicibacterium</taxon>
    </lineage>
</organism>
<reference key="1">
    <citation type="submission" date="2006-10" db="EMBL/GenBank/DDBJ databases">
        <authorList>
            <person name="Fleischmann R.D."/>
            <person name="Dodson R.J."/>
            <person name="Haft D.H."/>
            <person name="Merkel J.S."/>
            <person name="Nelson W.C."/>
            <person name="Fraser C.M."/>
        </authorList>
    </citation>
    <scope>NUCLEOTIDE SEQUENCE [LARGE SCALE GENOMIC DNA]</scope>
    <source>
        <strain>ATCC 700084 / mc(2)155</strain>
    </source>
</reference>
<reference key="2">
    <citation type="journal article" date="2007" name="Genome Biol.">
        <title>Interrupted coding sequences in Mycobacterium smegmatis: authentic mutations or sequencing errors?</title>
        <authorList>
            <person name="Deshayes C."/>
            <person name="Perrodou E."/>
            <person name="Gallien S."/>
            <person name="Euphrasie D."/>
            <person name="Schaeffer C."/>
            <person name="Van-Dorsselaer A."/>
            <person name="Poch O."/>
            <person name="Lecompte O."/>
            <person name="Reyrat J.-M."/>
        </authorList>
    </citation>
    <scope>NUCLEOTIDE SEQUENCE [LARGE SCALE GENOMIC DNA]</scope>
    <source>
        <strain>ATCC 700084 / mc(2)155</strain>
    </source>
</reference>
<reference key="3">
    <citation type="journal article" date="2009" name="Genome Res.">
        <title>Ortho-proteogenomics: multiple proteomes investigation through orthology and a new MS-based protocol.</title>
        <authorList>
            <person name="Gallien S."/>
            <person name="Perrodou E."/>
            <person name="Carapito C."/>
            <person name="Deshayes C."/>
            <person name="Reyrat J.-M."/>
            <person name="Van Dorsselaer A."/>
            <person name="Poch O."/>
            <person name="Schaeffer C."/>
            <person name="Lecompte O."/>
        </authorList>
    </citation>
    <scope>NUCLEOTIDE SEQUENCE [LARGE SCALE GENOMIC DNA]</scope>
    <source>
        <strain>ATCC 700084 / mc(2)155</strain>
    </source>
</reference>
<dbReference type="EC" id="2.1.1.-" evidence="1"/>
<dbReference type="EMBL" id="CP000480">
    <property type="protein sequence ID" value="ABK73841.1"/>
    <property type="molecule type" value="Genomic_DNA"/>
</dbReference>
<dbReference type="EMBL" id="CP001663">
    <property type="protein sequence ID" value="AFP43174.1"/>
    <property type="status" value="ALT_INIT"/>
    <property type="molecule type" value="Genomic_DNA"/>
</dbReference>
<dbReference type="RefSeq" id="YP_891133.1">
    <property type="nucleotide sequence ID" value="NC_008596.1"/>
</dbReference>
<dbReference type="SMR" id="A0R7J5"/>
<dbReference type="STRING" id="246196.MSMEG_6940"/>
<dbReference type="PaxDb" id="246196-MSMEI_6748"/>
<dbReference type="KEGG" id="msg:MSMEI_6748"/>
<dbReference type="KEGG" id="msm:MSMEG_6940"/>
<dbReference type="PATRIC" id="fig|246196.19.peg.6753"/>
<dbReference type="eggNOG" id="COG0357">
    <property type="taxonomic scope" value="Bacteria"/>
</dbReference>
<dbReference type="OrthoDB" id="9808773at2"/>
<dbReference type="Proteomes" id="UP000000757">
    <property type="component" value="Chromosome"/>
</dbReference>
<dbReference type="Proteomes" id="UP000006158">
    <property type="component" value="Chromosome"/>
</dbReference>
<dbReference type="GO" id="GO:0005829">
    <property type="term" value="C:cytosol"/>
    <property type="evidence" value="ECO:0007669"/>
    <property type="project" value="TreeGrafter"/>
</dbReference>
<dbReference type="GO" id="GO:0070043">
    <property type="term" value="F:rRNA (guanine-N7-)-methyltransferase activity"/>
    <property type="evidence" value="ECO:0007669"/>
    <property type="project" value="UniProtKB-UniRule"/>
</dbReference>
<dbReference type="CDD" id="cd02440">
    <property type="entry name" value="AdoMet_MTases"/>
    <property type="match status" value="1"/>
</dbReference>
<dbReference type="Gene3D" id="3.40.50.150">
    <property type="entry name" value="Vaccinia Virus protein VP39"/>
    <property type="match status" value="1"/>
</dbReference>
<dbReference type="HAMAP" id="MF_00074">
    <property type="entry name" value="16SrRNA_methyltr_G"/>
    <property type="match status" value="1"/>
</dbReference>
<dbReference type="InterPro" id="IPR003682">
    <property type="entry name" value="rRNA_ssu_MeTfrase_G"/>
</dbReference>
<dbReference type="InterPro" id="IPR029063">
    <property type="entry name" value="SAM-dependent_MTases_sf"/>
</dbReference>
<dbReference type="NCBIfam" id="TIGR00138">
    <property type="entry name" value="rsmG_gidB"/>
    <property type="match status" value="1"/>
</dbReference>
<dbReference type="PANTHER" id="PTHR31760">
    <property type="entry name" value="S-ADENOSYL-L-METHIONINE-DEPENDENT METHYLTRANSFERASES SUPERFAMILY PROTEIN"/>
    <property type="match status" value="1"/>
</dbReference>
<dbReference type="PANTHER" id="PTHR31760:SF0">
    <property type="entry name" value="S-ADENOSYL-L-METHIONINE-DEPENDENT METHYLTRANSFERASES SUPERFAMILY PROTEIN"/>
    <property type="match status" value="1"/>
</dbReference>
<dbReference type="Pfam" id="PF02527">
    <property type="entry name" value="GidB"/>
    <property type="match status" value="1"/>
</dbReference>
<dbReference type="SUPFAM" id="SSF53335">
    <property type="entry name" value="S-adenosyl-L-methionine-dependent methyltransferases"/>
    <property type="match status" value="1"/>
</dbReference>
<protein>
    <recommendedName>
        <fullName evidence="1">Ribosomal RNA small subunit methyltransferase G</fullName>
        <ecNumber evidence="1">2.1.1.-</ecNumber>
    </recommendedName>
    <alternativeName>
        <fullName evidence="1">16S rRNA 7-methylguanosine methyltransferase</fullName>
        <shortName evidence="1">16S rRNA m7G methyltransferase</shortName>
    </alternativeName>
</protein>
<name>RSMG_MYCS2</name>
<sequence length="235" mass="25732">MKHGSVPATPEAASLVFGDRLEAAELYARILAGAGVEWGLLGPREVDRVWERHILNSAALGELMEPGERVADIGSGAGLPGIPLALARPDIHVTLIEPLLRRSEFLRETVTELGLDVTVVRGRAEDREVRDRVGEMDVVTSRAVASLDKLTRWSVPFLRDGGRMLPIKGERAEVEIEEHRRVMESLGAVDARVVRCGANYLSPPVTVVDARRRAAKPGRNKSGRTARSRGRTGRR</sequence>